<proteinExistence type="inferred from homology"/>
<protein>
    <recommendedName>
        <fullName evidence="1">Citrate lyase acyl carrier protein</fullName>
    </recommendedName>
    <alternativeName>
        <fullName evidence="1">Citrate lyase gamma chain</fullName>
    </alternativeName>
</protein>
<organism>
    <name type="scientific">Leuconostoc citreum (strain KM20)</name>
    <dbReference type="NCBI Taxonomy" id="349519"/>
    <lineage>
        <taxon>Bacteria</taxon>
        <taxon>Bacillati</taxon>
        <taxon>Bacillota</taxon>
        <taxon>Bacilli</taxon>
        <taxon>Lactobacillales</taxon>
        <taxon>Lactobacillaceae</taxon>
        <taxon>Leuconostoc</taxon>
    </lineage>
</organism>
<gene>
    <name evidence="1" type="primary">citD</name>
    <name type="ordered locus">LCK_00108</name>
</gene>
<dbReference type="EMBL" id="DQ489736">
    <property type="protein sequence ID" value="ACA81941.1"/>
    <property type="molecule type" value="Genomic_DNA"/>
</dbReference>
<dbReference type="RefSeq" id="WP_004908609.1">
    <property type="nucleotide sequence ID" value="NC_010471.1"/>
</dbReference>
<dbReference type="SMR" id="B1MWL9"/>
<dbReference type="STRING" id="349519.LCK_00108"/>
<dbReference type="KEGG" id="lci:LCK_00108"/>
<dbReference type="eggNOG" id="COG3052">
    <property type="taxonomic scope" value="Bacteria"/>
</dbReference>
<dbReference type="HOGENOM" id="CLU_158489_0_0_9"/>
<dbReference type="OrthoDB" id="1120942at2"/>
<dbReference type="Proteomes" id="UP000002166">
    <property type="component" value="Chromosome"/>
</dbReference>
<dbReference type="GO" id="GO:0005737">
    <property type="term" value="C:cytoplasm"/>
    <property type="evidence" value="ECO:0007669"/>
    <property type="project" value="UniProtKB-SubCell"/>
</dbReference>
<dbReference type="HAMAP" id="MF_00805">
    <property type="entry name" value="CitD"/>
    <property type="match status" value="1"/>
</dbReference>
<dbReference type="InterPro" id="IPR006495">
    <property type="entry name" value="CitD"/>
</dbReference>
<dbReference type="InterPro" id="IPR023439">
    <property type="entry name" value="Mal_deCO2ase/Cit_lyase_ACP"/>
</dbReference>
<dbReference type="NCBIfam" id="TIGR01608">
    <property type="entry name" value="citD"/>
    <property type="match status" value="1"/>
</dbReference>
<dbReference type="NCBIfam" id="NF009726">
    <property type="entry name" value="PRK13253.1"/>
    <property type="match status" value="1"/>
</dbReference>
<dbReference type="Pfam" id="PF06857">
    <property type="entry name" value="ACP"/>
    <property type="match status" value="1"/>
</dbReference>
<dbReference type="PIRSF" id="PIRSF002736">
    <property type="entry name" value="Citrt_lyas_gamma"/>
    <property type="match status" value="1"/>
</dbReference>
<name>CITD_LEUCK</name>
<accession>B1MWL9</accession>
<comment type="function">
    <text evidence="1">Covalent carrier of the coenzyme of citrate lyase.</text>
</comment>
<comment type="subunit">
    <text evidence="1">Oligomer with a subunit composition of (alpha,beta,gamma)6.</text>
</comment>
<comment type="subcellular location">
    <subcellularLocation>
        <location evidence="1">Cytoplasm</location>
    </subcellularLocation>
</comment>
<comment type="similarity">
    <text evidence="1">Belongs to the CitD family.</text>
</comment>
<reference key="1">
    <citation type="journal article" date="2008" name="J. Bacteriol.">
        <title>Complete genome sequence of Leuconostoc citreum KM20.</title>
        <authorList>
            <person name="Kim J.F."/>
            <person name="Jeong H."/>
            <person name="Lee J.-S."/>
            <person name="Choi S.-H."/>
            <person name="Ha M."/>
            <person name="Hur C.-G."/>
            <person name="Kim J.-S."/>
            <person name="Lee S."/>
            <person name="Park H.-S."/>
            <person name="Park Y.-H."/>
            <person name="Oh T.K."/>
        </authorList>
    </citation>
    <scope>NUCLEOTIDE SEQUENCE [LARGE SCALE GENOMIC DNA]</scope>
    <source>
        <strain>KM20</strain>
    </source>
</reference>
<keyword id="KW-0963">Cytoplasm</keyword>
<keyword id="KW-0597">Phosphoprotein</keyword>
<keyword id="KW-1185">Reference proteome</keyword>
<feature type="chain" id="PRO_1000133974" description="Citrate lyase acyl carrier protein">
    <location>
        <begin position="1"/>
        <end position="97"/>
    </location>
</feature>
<feature type="modified residue" description="O-(phosphoribosyl dephospho-coenzyme A)serine" evidence="1">
    <location>
        <position position="14"/>
    </location>
</feature>
<sequence>MEIKKTAMAGTLESSDVQIMLSQGRDGITFDLVSDVAKQFDDAIKATITAVLALYGVDNAEVKVVDKGALDMVIKARAMTAVQRALDLADEPNWEVM</sequence>
<evidence type="ECO:0000255" key="1">
    <source>
        <dbReference type="HAMAP-Rule" id="MF_00805"/>
    </source>
</evidence>